<proteinExistence type="inferred from homology"/>
<name>TX2M1_LYCSI</name>
<reference key="1">
    <citation type="journal article" date="2010" name="Zoology">
        <title>Transcriptome analysis of the venom glands of the Chinese wolf spider Lycosa singoriensis.</title>
        <authorList>
            <person name="Zhang Y."/>
            <person name="Chen J."/>
            <person name="Tang X."/>
            <person name="Wang F."/>
            <person name="Jiang L."/>
            <person name="Xiong X."/>
            <person name="Wang M."/>
            <person name="Rong M."/>
            <person name="Liu Z."/>
            <person name="Liang S."/>
        </authorList>
    </citation>
    <scope>NUCLEOTIDE SEQUENCE [LARGE SCALE MRNA]</scope>
    <source>
        <tissue>Venom gland</tissue>
    </source>
</reference>
<keyword id="KW-1015">Disulfide bond</keyword>
<keyword id="KW-0872">Ion channel impairing toxin</keyword>
<keyword id="KW-0528">Neurotoxin</keyword>
<keyword id="KW-0632">Potassium channel impairing toxin</keyword>
<keyword id="KW-0964">Secreted</keyword>
<keyword id="KW-0732">Signal</keyword>
<keyword id="KW-0800">Toxin</keyword>
<keyword id="KW-1220">Voltage-gated potassium channel impairing toxin</keyword>
<comment type="function">
    <text evidence="1">Insecticidal to house crickets. It induces an excitatory slow-onset impact that leads to irreversible spastic paralysis. It also modifies human voltage-gated potassium channel Kv1.5/KCNA5. Most likely, it binds to the voltage-sensing domain of the channel, suggesting it does not block the pore but prevents its opening at physiological membrane potentials. The recombinant peptide binds to the channel in an irreversible manner and slows down the hKv1.5 current activation kinetics. It is not toxic to mice, when intracranially injected (at 0.5 ug/g mouse).</text>
</comment>
<comment type="subcellular location">
    <subcellularLocation>
        <location evidence="5">Secreted</location>
    </subcellularLocation>
</comment>
<comment type="tissue specificity">
    <text evidence="5">Expressed by the venom gland.</text>
</comment>
<comment type="similarity">
    <text evidence="4">Belongs to the neurotoxin 04 (omega-agtx) family. 01 (type I omega-agtx) subfamily.</text>
</comment>
<feature type="signal peptide" evidence="2">
    <location>
        <begin position="1"/>
        <end position="17"/>
    </location>
</feature>
<feature type="propeptide" id="PRO_0000401713" evidence="5">
    <location>
        <begin position="18"/>
        <end position="41"/>
    </location>
</feature>
<feature type="chain" id="PRO_0000401714" description="U2-lycotoxin-Ls1a" evidence="5">
    <location>
        <begin position="42"/>
        <end position="105"/>
    </location>
</feature>
<feature type="disulfide bond" evidence="1">
    <location>
        <begin position="51"/>
        <end position="67"/>
    </location>
</feature>
<feature type="disulfide bond" evidence="1">
    <location>
        <begin position="58"/>
        <end position="97"/>
    </location>
</feature>
<feature type="disulfide bond" evidence="1">
    <location>
        <begin position="60"/>
        <end position="83"/>
    </location>
</feature>
<feature type="disulfide bond" evidence="1">
    <location>
        <begin position="69"/>
        <end position="81"/>
    </location>
</feature>
<sequence>MIKYVLISALLVVAVYSFTIEDNEDALLEEAEDELDTEEERRMALPPGAVCNGHKSDCQCFGAKYKCSCPLLWRFRRSAKCHCKKGWAWTAIKKRSCHNRYQWSG</sequence>
<accession>B6DD29</accession>
<evidence type="ECO:0000250" key="1">
    <source>
        <dbReference type="UniProtKB" id="C0HLR8"/>
    </source>
</evidence>
<evidence type="ECO:0000255" key="2"/>
<evidence type="ECO:0000303" key="3">
    <source>
    </source>
</evidence>
<evidence type="ECO:0000305" key="4"/>
<evidence type="ECO:0000305" key="5">
    <source>
    </source>
</evidence>
<organism>
    <name type="scientific">Lycosa singoriensis</name>
    <name type="common">Wolf spider</name>
    <name type="synonym">Aranea singoriensis</name>
    <dbReference type="NCBI Taxonomy" id="434756"/>
    <lineage>
        <taxon>Eukaryota</taxon>
        <taxon>Metazoa</taxon>
        <taxon>Ecdysozoa</taxon>
        <taxon>Arthropoda</taxon>
        <taxon>Chelicerata</taxon>
        <taxon>Arachnida</taxon>
        <taxon>Araneae</taxon>
        <taxon>Araneomorphae</taxon>
        <taxon>Entelegynae</taxon>
        <taxon>Lycosoidea</taxon>
        <taxon>Lycosidae</taxon>
        <taxon>Lycosa</taxon>
    </lineage>
</organism>
<dbReference type="EMBL" id="EU926113">
    <property type="protein sequence ID" value="ACI41445.1"/>
    <property type="molecule type" value="mRNA"/>
</dbReference>
<dbReference type="EMBL" id="FM864117">
    <property type="protein sequence ID" value="CAS03714.1"/>
    <property type="molecule type" value="mRNA"/>
</dbReference>
<dbReference type="SMR" id="B6DD29"/>
<dbReference type="ArachnoServer" id="AS001052">
    <property type="toxin name" value="U2-lycotoxin-Ls1a"/>
</dbReference>
<dbReference type="GO" id="GO:0005576">
    <property type="term" value="C:extracellular region"/>
    <property type="evidence" value="ECO:0007669"/>
    <property type="project" value="UniProtKB-SubCell"/>
</dbReference>
<dbReference type="GO" id="GO:0015459">
    <property type="term" value="F:potassium channel regulator activity"/>
    <property type="evidence" value="ECO:0007669"/>
    <property type="project" value="UniProtKB-KW"/>
</dbReference>
<dbReference type="GO" id="GO:0090729">
    <property type="term" value="F:toxin activity"/>
    <property type="evidence" value="ECO:0007669"/>
    <property type="project" value="UniProtKB-KW"/>
</dbReference>
<dbReference type="InterPro" id="IPR013605">
    <property type="entry name" value="Toxin_34"/>
</dbReference>
<dbReference type="Pfam" id="PF08396">
    <property type="entry name" value="Toxin_34"/>
    <property type="match status" value="1"/>
</dbReference>
<protein>
    <recommendedName>
        <fullName evidence="4">U2-lycotoxin-Ls1a</fullName>
        <shortName evidence="4">U2-LCTX-Ls1a</shortName>
    </recommendedName>
    <alternativeName>
        <fullName evidence="3">Toxin LSTX-M1</fullName>
    </alternativeName>
</protein>